<evidence type="ECO:0000255" key="1">
    <source>
        <dbReference type="HAMAP-Rule" id="MF_00337"/>
    </source>
</evidence>
<organism>
    <name type="scientific">Neisseria gonorrhoeae (strain ATCC 700825 / FA 1090)</name>
    <dbReference type="NCBI Taxonomy" id="242231"/>
    <lineage>
        <taxon>Bacteria</taxon>
        <taxon>Pseudomonadati</taxon>
        <taxon>Pseudomonadota</taxon>
        <taxon>Betaproteobacteria</taxon>
        <taxon>Neisseriales</taxon>
        <taxon>Neisseriaceae</taxon>
        <taxon>Neisseria</taxon>
    </lineage>
</organism>
<name>EX7S_NEIG1</name>
<protein>
    <recommendedName>
        <fullName evidence="1">Exodeoxyribonuclease 7 small subunit</fullName>
        <ecNumber evidence="1">3.1.11.6</ecNumber>
    </recommendedName>
    <alternativeName>
        <fullName evidence="1">Exodeoxyribonuclease VII small subunit</fullName>
        <shortName evidence="1">Exonuclease VII small subunit</shortName>
    </alternativeName>
</protein>
<accession>Q5F632</accession>
<feature type="chain" id="PRO_0000206976" description="Exodeoxyribonuclease 7 small subunit">
    <location>
        <begin position="1"/>
        <end position="74"/>
    </location>
</feature>
<proteinExistence type="inferred from homology"/>
<reference key="1">
    <citation type="submission" date="2003-03" db="EMBL/GenBank/DDBJ databases">
        <title>The complete genome sequence of Neisseria gonorrhoeae.</title>
        <authorList>
            <person name="Lewis L.A."/>
            <person name="Gillaspy A.F."/>
            <person name="McLaughlin R.E."/>
            <person name="Gipson M."/>
            <person name="Ducey T.F."/>
            <person name="Ownbey T."/>
            <person name="Hartman K."/>
            <person name="Nydick C."/>
            <person name="Carson M.B."/>
            <person name="Vaughn J."/>
            <person name="Thomson C."/>
            <person name="Song L."/>
            <person name="Lin S."/>
            <person name="Yuan X."/>
            <person name="Najar F."/>
            <person name="Zhan M."/>
            <person name="Ren Q."/>
            <person name="Zhu H."/>
            <person name="Qi S."/>
            <person name="Kenton S.M."/>
            <person name="Lai H."/>
            <person name="White J.D."/>
            <person name="Clifton S."/>
            <person name="Roe B.A."/>
            <person name="Dyer D.W."/>
        </authorList>
    </citation>
    <scope>NUCLEOTIDE SEQUENCE [LARGE SCALE GENOMIC DNA]</scope>
    <source>
        <strain>ATCC 700825 / FA 1090</strain>
    </source>
</reference>
<gene>
    <name evidence="1" type="primary">xseB</name>
    <name type="ordered locus">NGO_1734</name>
</gene>
<comment type="function">
    <text evidence="1">Bidirectionally degrades single-stranded DNA into large acid-insoluble oligonucleotides, which are then degraded further into small acid-soluble oligonucleotides.</text>
</comment>
<comment type="catalytic activity">
    <reaction evidence="1">
        <text>Exonucleolytic cleavage in either 5'- to 3'- or 3'- to 5'-direction to yield nucleoside 5'-phosphates.</text>
        <dbReference type="EC" id="3.1.11.6"/>
    </reaction>
</comment>
<comment type="subunit">
    <text evidence="1">Heterooligomer composed of large and small subunits.</text>
</comment>
<comment type="subcellular location">
    <subcellularLocation>
        <location evidence="1">Cytoplasm</location>
    </subcellularLocation>
</comment>
<comment type="similarity">
    <text evidence="1">Belongs to the XseB family.</text>
</comment>
<dbReference type="EC" id="3.1.11.6" evidence="1"/>
<dbReference type="EMBL" id="AE004969">
    <property type="protein sequence ID" value="AAW90355.1"/>
    <property type="molecule type" value="Genomic_DNA"/>
</dbReference>
<dbReference type="RefSeq" id="YP_208767.1">
    <property type="nucleotide sequence ID" value="NC_002946.2"/>
</dbReference>
<dbReference type="SMR" id="Q5F632"/>
<dbReference type="STRING" id="242231.NGO_1734"/>
<dbReference type="KEGG" id="ngo:NGO_1734"/>
<dbReference type="PATRIC" id="fig|242231.10.peg.2073"/>
<dbReference type="HOGENOM" id="CLU_145918_2_0_4"/>
<dbReference type="Proteomes" id="UP000000535">
    <property type="component" value="Chromosome"/>
</dbReference>
<dbReference type="GO" id="GO:0005829">
    <property type="term" value="C:cytosol"/>
    <property type="evidence" value="ECO:0007669"/>
    <property type="project" value="TreeGrafter"/>
</dbReference>
<dbReference type="GO" id="GO:0009318">
    <property type="term" value="C:exodeoxyribonuclease VII complex"/>
    <property type="evidence" value="ECO:0007669"/>
    <property type="project" value="InterPro"/>
</dbReference>
<dbReference type="GO" id="GO:0008855">
    <property type="term" value="F:exodeoxyribonuclease VII activity"/>
    <property type="evidence" value="ECO:0007669"/>
    <property type="project" value="UniProtKB-UniRule"/>
</dbReference>
<dbReference type="GO" id="GO:0006308">
    <property type="term" value="P:DNA catabolic process"/>
    <property type="evidence" value="ECO:0007669"/>
    <property type="project" value="UniProtKB-UniRule"/>
</dbReference>
<dbReference type="FunFam" id="1.10.287.1040:FF:000012">
    <property type="entry name" value="Exodeoxyribonuclease 7 small subunit"/>
    <property type="match status" value="1"/>
</dbReference>
<dbReference type="Gene3D" id="1.10.287.1040">
    <property type="entry name" value="Exonuclease VII, small subunit"/>
    <property type="match status" value="1"/>
</dbReference>
<dbReference type="HAMAP" id="MF_00337">
    <property type="entry name" value="Exonuc_7_S"/>
    <property type="match status" value="1"/>
</dbReference>
<dbReference type="InterPro" id="IPR003761">
    <property type="entry name" value="Exonuc_VII_S"/>
</dbReference>
<dbReference type="InterPro" id="IPR037004">
    <property type="entry name" value="Exonuc_VII_ssu_sf"/>
</dbReference>
<dbReference type="NCBIfam" id="NF002141">
    <property type="entry name" value="PRK00977.1-5"/>
    <property type="match status" value="1"/>
</dbReference>
<dbReference type="NCBIfam" id="TIGR01280">
    <property type="entry name" value="xseB"/>
    <property type="match status" value="1"/>
</dbReference>
<dbReference type="PANTHER" id="PTHR34137">
    <property type="entry name" value="EXODEOXYRIBONUCLEASE 7 SMALL SUBUNIT"/>
    <property type="match status" value="1"/>
</dbReference>
<dbReference type="PANTHER" id="PTHR34137:SF1">
    <property type="entry name" value="EXODEOXYRIBONUCLEASE 7 SMALL SUBUNIT"/>
    <property type="match status" value="1"/>
</dbReference>
<dbReference type="Pfam" id="PF02609">
    <property type="entry name" value="Exonuc_VII_S"/>
    <property type="match status" value="1"/>
</dbReference>
<dbReference type="PIRSF" id="PIRSF006488">
    <property type="entry name" value="Exonuc_VII_S"/>
    <property type="match status" value="1"/>
</dbReference>
<dbReference type="SUPFAM" id="SSF116842">
    <property type="entry name" value="XseB-like"/>
    <property type="match status" value="1"/>
</dbReference>
<sequence length="74" mass="8363">MKKNTPKSFEEALSRLESLTQSMQGEMPLEDALAAYQEGNELVRYCQTKLAQVEQKLQVLDADGTKELNLESDE</sequence>
<keyword id="KW-0963">Cytoplasm</keyword>
<keyword id="KW-0269">Exonuclease</keyword>
<keyword id="KW-0378">Hydrolase</keyword>
<keyword id="KW-0540">Nuclease</keyword>
<keyword id="KW-1185">Reference proteome</keyword>